<sequence length="654" mass="72661">MSEASSEDLVPPLEAGAAPYREEEEAAKKKKEKKKKSKGLANVFCVFTKGKKKKGQPSSAEPEDAAGSRQGLDGPPPTVEELKAALERGQLEAARPLLALERELAAAAAAGGVSEEELVRRQSKVEALYELLRDQVLGVLRRPLEAPPERLRQALAVVAEQEREDRQAAAAGPGTSGLAATRPRRWLQLWRRGVAEAAEERMGQRPAAGAEVPESVFLHLGRTMKEDLEAVVERLKPLFPAEFGVVAAYAESYHQHFAAHLAAVAQFELCERDTYMLLLWVQNLYPNDIINSPKLVGELQGMGLGSLLPPRQIRLLEATFLSSEAANVRELMDRALELEARRWAEDVPPQRLDGHCHSELAIDIIQITSQAQAKAESITLDLGSQIKRVLLVELPAFLRSYQRAFNEFLERGKQLTNYRANVIANINNCLSFRMSMEQNWQVPQDTLSLLLGPLGELKSHGFDTLLQNLHEDLKPLFKRFTHTRWAAPVETLENIIATVDTRLPEFSELQGCFREELMEALHLHLVKEYIIQLSKGRLVLKTAEQQQQLAGYILANADTIQHFCTQHGSPATWLQPALPTLAEIIRLQDPSAIKIEVATYATCYPDFSKGHLSAILAIKGNLSNSEVKRIRSILDVSMGAQEPSRPLFSLIKVG</sequence>
<evidence type="ECO:0000256" key="1">
    <source>
        <dbReference type="SAM" id="MobiDB-lite"/>
    </source>
</evidence>
<evidence type="ECO:0000269" key="2">
    <source>
    </source>
</evidence>
<evidence type="ECO:0000269" key="3">
    <source ref="3"/>
</evidence>
<evidence type="ECO:0000305" key="4"/>
<name>TNAP2_HUMAN</name>
<organism>
    <name type="scientific">Homo sapiens</name>
    <name type="common">Human</name>
    <dbReference type="NCBI Taxonomy" id="9606"/>
    <lineage>
        <taxon>Eukaryota</taxon>
        <taxon>Metazoa</taxon>
        <taxon>Chordata</taxon>
        <taxon>Craniata</taxon>
        <taxon>Vertebrata</taxon>
        <taxon>Euteleostomi</taxon>
        <taxon>Mammalia</taxon>
        <taxon>Eutheria</taxon>
        <taxon>Euarchontoglires</taxon>
        <taxon>Primates</taxon>
        <taxon>Haplorrhini</taxon>
        <taxon>Catarrhini</taxon>
        <taxon>Hominidae</taxon>
        <taxon>Homo</taxon>
    </lineage>
</organism>
<feature type="chain" id="PRO_0000118932" description="Tumor necrosis factor alpha-induced protein 2">
    <location>
        <begin position="1"/>
        <end position="654"/>
    </location>
</feature>
<feature type="region of interest" description="Disordered" evidence="1">
    <location>
        <begin position="1"/>
        <end position="38"/>
    </location>
</feature>
<feature type="region of interest" description="Disordered" evidence="1">
    <location>
        <begin position="50"/>
        <end position="78"/>
    </location>
</feature>
<feature type="compositionally biased region" description="Basic residues" evidence="1">
    <location>
        <begin position="28"/>
        <end position="38"/>
    </location>
</feature>
<feature type="sequence variant" id="VAR_038742" evidence="3">
    <original>A</original>
    <variation>AA</variation>
    <location>
        <position position="110"/>
    </location>
</feature>
<feature type="sequence variant" id="VAR_020772" description="In dbSNP:rs1132339." evidence="2 3">
    <original>Q</original>
    <variation>E</variation>
    <location>
        <position position="282"/>
    </location>
</feature>
<feature type="sequence variant" id="VAR_020773" description="In dbSNP:rs2229727." evidence="3">
    <original>T</original>
    <variation>I</variation>
    <location>
        <position position="565"/>
    </location>
</feature>
<feature type="sequence variant" id="VAR_020774" description="In dbSNP:rs2234146." evidence="3">
    <original>T</original>
    <variation>M</variation>
    <location>
        <position position="580"/>
    </location>
</feature>
<proteinExistence type="evidence at protein level"/>
<accession>Q03169</accession>
<accession>Q86VI0</accession>
<protein>
    <recommendedName>
        <fullName>Tumor necrosis factor alpha-induced protein 2</fullName>
        <shortName>TNF alpha-induced protein 2</shortName>
    </recommendedName>
    <alternativeName>
        <fullName>Primary response gene B94 protein</fullName>
    </alternativeName>
</protein>
<gene>
    <name type="primary">TNFAIP2</name>
</gene>
<comment type="function">
    <text>May play a role as a mediator of inflammation and angiogenesis.</text>
</comment>
<comment type="interaction">
    <interactant intactId="EBI-7954198">
        <id>Q03169</id>
    </interactant>
    <interactant intactId="EBI-743272">
        <id>O75604</id>
        <label>USP2</label>
    </interactant>
    <organismsDiffer>false</organismsDiffer>
    <experiments>3</experiments>
</comment>
<comment type="developmental stage">
    <text>Differentially expressed in development and capillary tube-like formation in vitro.</text>
</comment>
<comment type="induction">
    <text>By TNF and other pro-inflammatory factors.</text>
</comment>
<comment type="similarity">
    <text evidence="4">Belongs to the SEC6 family.</text>
</comment>
<dbReference type="EMBL" id="M92357">
    <property type="protein sequence ID" value="AAA35582.1"/>
    <property type="molecule type" value="mRNA"/>
</dbReference>
<dbReference type="EMBL" id="AL161669">
    <property type="status" value="NOT_ANNOTATED_CDS"/>
    <property type="molecule type" value="Genomic_DNA"/>
</dbReference>
<dbReference type="EMBL" id="AY273786">
    <property type="protein sequence ID" value="AAP12649.1"/>
    <property type="molecule type" value="Genomic_DNA"/>
</dbReference>
<dbReference type="CCDS" id="CCDS9979.1"/>
<dbReference type="PIR" id="I56134">
    <property type="entry name" value="I56134"/>
</dbReference>
<dbReference type="RefSeq" id="NP_006282.2">
    <property type="nucleotide sequence ID" value="NM_006291.2"/>
</dbReference>
<dbReference type="RefSeq" id="XP_011535416.1">
    <property type="nucleotide sequence ID" value="XM_011537114.2"/>
</dbReference>
<dbReference type="SMR" id="Q03169"/>
<dbReference type="BioGRID" id="112982">
    <property type="interactions" value="65"/>
</dbReference>
<dbReference type="FunCoup" id="Q03169">
    <property type="interactions" value="45"/>
</dbReference>
<dbReference type="IntAct" id="Q03169">
    <property type="interactions" value="36"/>
</dbReference>
<dbReference type="MINT" id="Q03169"/>
<dbReference type="STRING" id="9606.ENSP00000452634"/>
<dbReference type="TCDB" id="1.L.1.1.1">
    <property type="family name" value="the tunneling nanotube (tnt) family"/>
</dbReference>
<dbReference type="GlyGen" id="Q03169">
    <property type="glycosylation" value="1 site"/>
</dbReference>
<dbReference type="iPTMnet" id="Q03169"/>
<dbReference type="PhosphoSitePlus" id="Q03169"/>
<dbReference type="SwissPalm" id="Q03169"/>
<dbReference type="BioMuta" id="TNFAIP2"/>
<dbReference type="DMDM" id="93141326"/>
<dbReference type="jPOST" id="Q03169"/>
<dbReference type="MassIVE" id="Q03169"/>
<dbReference type="PaxDb" id="9606-ENSP00000452634"/>
<dbReference type="PeptideAtlas" id="Q03169"/>
<dbReference type="ProteomicsDB" id="58199"/>
<dbReference type="Pumba" id="Q03169"/>
<dbReference type="Antibodypedia" id="3892">
    <property type="antibodies" value="194 antibodies from 31 providers"/>
</dbReference>
<dbReference type="CPTC" id="Q03169">
    <property type="antibodies" value="1 antibody"/>
</dbReference>
<dbReference type="DNASU" id="7127"/>
<dbReference type="Ensembl" id="ENST00000333007.8">
    <property type="protein sequence ID" value="ENSP00000332326.1"/>
    <property type="gene ID" value="ENSG00000185215.11"/>
</dbReference>
<dbReference type="Ensembl" id="ENST00000560869.6">
    <property type="protein sequence ID" value="ENSP00000452634.2"/>
    <property type="gene ID" value="ENSG00000185215.11"/>
</dbReference>
<dbReference type="GeneID" id="7127"/>
<dbReference type="KEGG" id="hsa:7127"/>
<dbReference type="MANE-Select" id="ENST00000560869.6">
    <property type="protein sequence ID" value="ENSP00000452634.2"/>
    <property type="RefSeq nucleotide sequence ID" value="NM_006291.4"/>
    <property type="RefSeq protein sequence ID" value="NP_006282.2"/>
</dbReference>
<dbReference type="UCSC" id="uc001ymm.1">
    <property type="organism name" value="human"/>
</dbReference>
<dbReference type="AGR" id="HGNC:11895"/>
<dbReference type="CTD" id="7127"/>
<dbReference type="DisGeNET" id="7127"/>
<dbReference type="GeneCards" id="TNFAIP2"/>
<dbReference type="HGNC" id="HGNC:11895">
    <property type="gene designation" value="TNFAIP2"/>
</dbReference>
<dbReference type="HPA" id="ENSG00000185215">
    <property type="expression patterns" value="Tissue enhanced (urinary)"/>
</dbReference>
<dbReference type="MIM" id="603300">
    <property type="type" value="gene"/>
</dbReference>
<dbReference type="neXtProt" id="NX_Q03169"/>
<dbReference type="OpenTargets" id="ENSG00000185215"/>
<dbReference type="PharmGKB" id="PA36592"/>
<dbReference type="VEuPathDB" id="HostDB:ENSG00000185215"/>
<dbReference type="eggNOG" id="KOG2286">
    <property type="taxonomic scope" value="Eukaryota"/>
</dbReference>
<dbReference type="GeneTree" id="ENSGT01030000234613"/>
<dbReference type="HOGENOM" id="CLU_016260_2_0_1"/>
<dbReference type="InParanoid" id="Q03169"/>
<dbReference type="OMA" id="KKHRYYK"/>
<dbReference type="OrthoDB" id="190098at2759"/>
<dbReference type="PAN-GO" id="Q03169">
    <property type="GO annotations" value="4 GO annotations based on evolutionary models"/>
</dbReference>
<dbReference type="PhylomeDB" id="Q03169"/>
<dbReference type="TreeFam" id="TF314979"/>
<dbReference type="PathwayCommons" id="Q03169"/>
<dbReference type="SignaLink" id="Q03169"/>
<dbReference type="BioGRID-ORCS" id="7127">
    <property type="hits" value="68 hits in 1160 CRISPR screens"/>
</dbReference>
<dbReference type="ChiTaRS" id="TNFAIP2">
    <property type="organism name" value="human"/>
</dbReference>
<dbReference type="GenomeRNAi" id="7127"/>
<dbReference type="Pharos" id="Q03169">
    <property type="development level" value="Tbio"/>
</dbReference>
<dbReference type="PRO" id="PR:Q03169"/>
<dbReference type="Proteomes" id="UP000005640">
    <property type="component" value="Chromosome 14"/>
</dbReference>
<dbReference type="RNAct" id="Q03169">
    <property type="molecule type" value="protein"/>
</dbReference>
<dbReference type="Bgee" id="ENSG00000185215">
    <property type="expression patterns" value="Expressed in granulocyte and 168 other cell types or tissues"/>
</dbReference>
<dbReference type="ExpressionAtlas" id="Q03169">
    <property type="expression patterns" value="baseline and differential"/>
</dbReference>
<dbReference type="GO" id="GO:0000145">
    <property type="term" value="C:exocyst"/>
    <property type="evidence" value="ECO:0000318"/>
    <property type="project" value="GO_Central"/>
</dbReference>
<dbReference type="GO" id="GO:0005615">
    <property type="term" value="C:extracellular space"/>
    <property type="evidence" value="ECO:0000304"/>
    <property type="project" value="ProtInc"/>
</dbReference>
<dbReference type="GO" id="GO:0000149">
    <property type="term" value="F:SNARE binding"/>
    <property type="evidence" value="ECO:0000318"/>
    <property type="project" value="GO_Central"/>
</dbReference>
<dbReference type="GO" id="GO:0001525">
    <property type="term" value="P:angiogenesis"/>
    <property type="evidence" value="ECO:0007669"/>
    <property type="project" value="UniProtKB-KW"/>
</dbReference>
<dbReference type="GO" id="GO:0030154">
    <property type="term" value="P:cell differentiation"/>
    <property type="evidence" value="ECO:0007669"/>
    <property type="project" value="UniProtKB-KW"/>
</dbReference>
<dbReference type="GO" id="GO:0051601">
    <property type="term" value="P:exocyst localization"/>
    <property type="evidence" value="ECO:0000318"/>
    <property type="project" value="GO_Central"/>
</dbReference>
<dbReference type="GO" id="GO:0006887">
    <property type="term" value="P:exocytosis"/>
    <property type="evidence" value="ECO:0000318"/>
    <property type="project" value="GO_Central"/>
</dbReference>
<dbReference type="FunFam" id="1.10.357.70:FF:000004">
    <property type="entry name" value="Tumor necrosis factor alpha-induced protein 2"/>
    <property type="match status" value="1"/>
</dbReference>
<dbReference type="Gene3D" id="1.10.357.70">
    <property type="entry name" value="Exocyst complex component Sec6, C-terminal domain"/>
    <property type="match status" value="1"/>
</dbReference>
<dbReference type="InterPro" id="IPR010326">
    <property type="entry name" value="EXOC3/Sec6"/>
</dbReference>
<dbReference type="InterPro" id="IPR042532">
    <property type="entry name" value="EXOC3/Sec6_C"/>
</dbReference>
<dbReference type="PANTHER" id="PTHR21292">
    <property type="entry name" value="EXOCYST COMPLEX COMPONENT SEC6-RELATED"/>
    <property type="match status" value="1"/>
</dbReference>
<dbReference type="PANTHER" id="PTHR21292:SF4">
    <property type="entry name" value="TUMOR NECROSIS FACTOR ALPHA-INDUCED PROTEIN 2"/>
    <property type="match status" value="1"/>
</dbReference>
<dbReference type="Pfam" id="PF06046">
    <property type="entry name" value="Sec6"/>
    <property type="match status" value="1"/>
</dbReference>
<reference key="1">
    <citation type="journal article" date="1992" name="J. Immunol.">
        <title>Cloning of a novel tumor necrosis factor-alpha-inducible primary response gene that is differentially expressed in development and capillary tube-like formation in vitro.</title>
        <authorList>
            <person name="Sarma V."/>
            <person name="Wolf F.W."/>
            <person name="Marks R.M."/>
            <person name="Shows T.B."/>
            <person name="Dixit V.M."/>
        </authorList>
    </citation>
    <scope>NUCLEOTIDE SEQUENCE [MRNA]</scope>
    <scope>VARIANT GLU-282</scope>
    <source>
        <tissue>Umbilical vein endothelial cell</tissue>
    </source>
</reference>
<reference key="2">
    <citation type="journal article" date="2003" name="Nature">
        <title>The DNA sequence and analysis of human chromosome 14.</title>
        <authorList>
            <person name="Heilig R."/>
            <person name="Eckenberg R."/>
            <person name="Petit J.-L."/>
            <person name="Fonknechten N."/>
            <person name="Da Silva C."/>
            <person name="Cattolico L."/>
            <person name="Levy M."/>
            <person name="Barbe V."/>
            <person name="De Berardinis V."/>
            <person name="Ureta-Vidal A."/>
            <person name="Pelletier E."/>
            <person name="Vico V."/>
            <person name="Anthouard V."/>
            <person name="Rowen L."/>
            <person name="Madan A."/>
            <person name="Qin S."/>
            <person name="Sun H."/>
            <person name="Du H."/>
            <person name="Pepin K."/>
            <person name="Artiguenave F."/>
            <person name="Robert C."/>
            <person name="Cruaud C."/>
            <person name="Bruels T."/>
            <person name="Jaillon O."/>
            <person name="Friedlander L."/>
            <person name="Samson G."/>
            <person name="Brottier P."/>
            <person name="Cure S."/>
            <person name="Segurens B."/>
            <person name="Aniere F."/>
            <person name="Samain S."/>
            <person name="Crespeau H."/>
            <person name="Abbasi N."/>
            <person name="Aiach N."/>
            <person name="Boscus D."/>
            <person name="Dickhoff R."/>
            <person name="Dors M."/>
            <person name="Dubois I."/>
            <person name="Friedman C."/>
            <person name="Gouyvenoux M."/>
            <person name="James R."/>
            <person name="Madan A."/>
            <person name="Mairey-Estrada B."/>
            <person name="Mangenot S."/>
            <person name="Martins N."/>
            <person name="Menard M."/>
            <person name="Oztas S."/>
            <person name="Ratcliffe A."/>
            <person name="Shaffer T."/>
            <person name="Trask B."/>
            <person name="Vacherie B."/>
            <person name="Bellemere C."/>
            <person name="Belser C."/>
            <person name="Besnard-Gonnet M."/>
            <person name="Bartol-Mavel D."/>
            <person name="Boutard M."/>
            <person name="Briez-Silla S."/>
            <person name="Combette S."/>
            <person name="Dufosse-Laurent V."/>
            <person name="Ferron C."/>
            <person name="Lechaplais C."/>
            <person name="Louesse C."/>
            <person name="Muselet D."/>
            <person name="Magdelenat G."/>
            <person name="Pateau E."/>
            <person name="Petit E."/>
            <person name="Sirvain-Trukniewicz P."/>
            <person name="Trybou A."/>
            <person name="Vega-Czarny N."/>
            <person name="Bataille E."/>
            <person name="Bluet E."/>
            <person name="Bordelais I."/>
            <person name="Dubois M."/>
            <person name="Dumont C."/>
            <person name="Guerin T."/>
            <person name="Haffray S."/>
            <person name="Hammadi R."/>
            <person name="Muanga J."/>
            <person name="Pellouin V."/>
            <person name="Robert D."/>
            <person name="Wunderle E."/>
            <person name="Gauguet G."/>
            <person name="Roy A."/>
            <person name="Sainte-Marthe L."/>
            <person name="Verdier J."/>
            <person name="Verdier-Discala C."/>
            <person name="Hillier L.W."/>
            <person name="Fulton L."/>
            <person name="McPherson J."/>
            <person name="Matsuda F."/>
            <person name="Wilson R."/>
            <person name="Scarpelli C."/>
            <person name="Gyapay G."/>
            <person name="Wincker P."/>
            <person name="Saurin W."/>
            <person name="Quetier F."/>
            <person name="Waterston R."/>
            <person name="Hood L."/>
            <person name="Weissenbach J."/>
        </authorList>
    </citation>
    <scope>NUCLEOTIDE SEQUENCE [LARGE SCALE GENOMIC DNA]</scope>
</reference>
<reference key="3">
    <citation type="submission" date="2003-04" db="EMBL/GenBank/DDBJ databases">
        <authorList>
            <consortium name="SeattleSNPs variation discovery resource"/>
        </authorList>
    </citation>
    <scope>NUCLEOTIDE SEQUENCE [GENOMIC DNA]</scope>
    <scope>VARIANTS ALA-110 INS; GLU-282; ILE-565 AND MET-580</scope>
</reference>
<keyword id="KW-0037">Angiogenesis</keyword>
<keyword id="KW-0217">Developmental protein</keyword>
<keyword id="KW-0221">Differentiation</keyword>
<keyword id="KW-1267">Proteomics identification</keyword>
<keyword id="KW-1185">Reference proteome</keyword>